<accession>Q5BK71</accession>
<name>ARL11_RAT</name>
<organism>
    <name type="scientific">Rattus norvegicus</name>
    <name type="common">Rat</name>
    <dbReference type="NCBI Taxonomy" id="10116"/>
    <lineage>
        <taxon>Eukaryota</taxon>
        <taxon>Metazoa</taxon>
        <taxon>Chordata</taxon>
        <taxon>Craniata</taxon>
        <taxon>Vertebrata</taxon>
        <taxon>Euteleostomi</taxon>
        <taxon>Mammalia</taxon>
        <taxon>Eutheria</taxon>
        <taxon>Euarchontoglires</taxon>
        <taxon>Glires</taxon>
        <taxon>Rodentia</taxon>
        <taxon>Myomorpha</taxon>
        <taxon>Muroidea</taxon>
        <taxon>Muridae</taxon>
        <taxon>Murinae</taxon>
        <taxon>Rattus</taxon>
    </lineage>
</organism>
<evidence type="ECO:0000250" key="1"/>
<evidence type="ECO:0000255" key="2"/>
<evidence type="ECO:0000305" key="3"/>
<sequence length="173" mass="19156">MGSVNSRGHKAQVVMLGLDCAGKTTILYKLKGNRLVDTLPTVGFNVEPLEAPGHVSLTLWDIGGQTQLRATWKDYLEGIDLLVYVLDSTDEARLPEAVAELEEVLEDPNMAGVPFLVLANKQEAPDALPLLEIRNRLDLERFQDHCWELRACSALTGQGLQEARQSLLHLLRS</sequence>
<keyword id="KW-0342">GTP-binding</keyword>
<keyword id="KW-0449">Lipoprotein</keyword>
<keyword id="KW-0519">Myristate</keyword>
<keyword id="KW-0547">Nucleotide-binding</keyword>
<keyword id="KW-1185">Reference proteome</keyword>
<proteinExistence type="evidence at transcript level"/>
<gene>
    <name type="primary">Arl11</name>
</gene>
<reference key="1">
    <citation type="journal article" date="2004" name="Genome Res.">
        <title>The status, quality, and expansion of the NIH full-length cDNA project: the Mammalian Gene Collection (MGC).</title>
        <authorList>
            <consortium name="The MGC Project Team"/>
        </authorList>
    </citation>
    <scope>NUCLEOTIDE SEQUENCE [LARGE SCALE MRNA]</scope>
    <source>
        <tissue>Spleen</tissue>
    </source>
</reference>
<comment type="function">
    <text evidence="1">May play a role in apoptosis. May act as a tumor suppressor (By similarity).</text>
</comment>
<comment type="similarity">
    <text evidence="3">Belongs to the small GTPase superfamily. Arf family.</text>
</comment>
<protein>
    <recommendedName>
        <fullName>ADP-ribosylation factor-like protein 11</fullName>
    </recommendedName>
</protein>
<feature type="initiator methionine" description="Removed" evidence="2">
    <location>
        <position position="1"/>
    </location>
</feature>
<feature type="chain" id="PRO_0000207481" description="ADP-ribosylation factor-like protein 11">
    <location>
        <begin position="2"/>
        <end position="173"/>
    </location>
</feature>
<feature type="binding site" evidence="1">
    <location>
        <begin position="17"/>
        <end position="24"/>
    </location>
    <ligand>
        <name>GTP</name>
        <dbReference type="ChEBI" id="CHEBI:37565"/>
    </ligand>
</feature>
<feature type="binding site" evidence="1">
    <location>
        <begin position="61"/>
        <end position="65"/>
    </location>
    <ligand>
        <name>GTP</name>
        <dbReference type="ChEBI" id="CHEBI:37565"/>
    </ligand>
</feature>
<feature type="binding site" evidence="1">
    <location>
        <begin position="120"/>
        <end position="123"/>
    </location>
    <ligand>
        <name>GTP</name>
        <dbReference type="ChEBI" id="CHEBI:37565"/>
    </ligand>
</feature>
<feature type="lipid moiety-binding region" description="N-myristoyl glycine" evidence="2">
    <location>
        <position position="2"/>
    </location>
</feature>
<dbReference type="EMBL" id="BC091183">
    <property type="protein sequence ID" value="AAH91183.1"/>
    <property type="molecule type" value="mRNA"/>
</dbReference>
<dbReference type="RefSeq" id="NP_001013451.1">
    <property type="nucleotide sequence ID" value="NM_001013433.2"/>
</dbReference>
<dbReference type="RefSeq" id="NP_001418519.1">
    <property type="nucleotide sequence ID" value="NM_001431590.1"/>
</dbReference>
<dbReference type="RefSeq" id="XP_006252197.1">
    <property type="nucleotide sequence ID" value="XM_006252135.3"/>
</dbReference>
<dbReference type="RefSeq" id="XP_017455251.1">
    <property type="nucleotide sequence ID" value="XM_017599762.1"/>
</dbReference>
<dbReference type="SMR" id="Q5BK71"/>
<dbReference type="FunCoup" id="Q5BK71">
    <property type="interactions" value="79"/>
</dbReference>
<dbReference type="STRING" id="10116.ENSRNOP00000019646"/>
<dbReference type="iPTMnet" id="Q5BK71"/>
<dbReference type="PhosphoSitePlus" id="Q5BK71"/>
<dbReference type="PaxDb" id="10116-ENSRNOP00000019646"/>
<dbReference type="Ensembl" id="ENSRNOT00000019646.4">
    <property type="protein sequence ID" value="ENSRNOP00000019646.2"/>
    <property type="gene ID" value="ENSRNOG00000014653.4"/>
</dbReference>
<dbReference type="Ensembl" id="ENSRNOT00000118171.1">
    <property type="protein sequence ID" value="ENSRNOP00000096153.1"/>
    <property type="gene ID" value="ENSRNOG00000014653.4"/>
</dbReference>
<dbReference type="GeneID" id="364396"/>
<dbReference type="KEGG" id="rno:364396"/>
<dbReference type="UCSC" id="RGD:1308083">
    <property type="organism name" value="rat"/>
</dbReference>
<dbReference type="AGR" id="RGD:1308083"/>
<dbReference type="CTD" id="115761"/>
<dbReference type="RGD" id="1308083">
    <property type="gene designation" value="Arl11"/>
</dbReference>
<dbReference type="eggNOG" id="KOG0070">
    <property type="taxonomic scope" value="Eukaryota"/>
</dbReference>
<dbReference type="GeneTree" id="ENSGT00940000162731"/>
<dbReference type="HOGENOM" id="CLU_040729_9_2_1"/>
<dbReference type="InParanoid" id="Q5BK71"/>
<dbReference type="OMA" id="GQAVETC"/>
<dbReference type="OrthoDB" id="39801at9989"/>
<dbReference type="PhylomeDB" id="Q5BK71"/>
<dbReference type="TreeFam" id="TF105471"/>
<dbReference type="PRO" id="PR:Q5BK71"/>
<dbReference type="Proteomes" id="UP000002494">
    <property type="component" value="Chromosome 15"/>
</dbReference>
<dbReference type="Bgee" id="ENSRNOG00000014653">
    <property type="expression patterns" value="Expressed in lung and 18 other cell types or tissues"/>
</dbReference>
<dbReference type="GO" id="GO:0005737">
    <property type="term" value="C:cytoplasm"/>
    <property type="evidence" value="ECO:0000318"/>
    <property type="project" value="GO_Central"/>
</dbReference>
<dbReference type="GO" id="GO:0005886">
    <property type="term" value="C:plasma membrane"/>
    <property type="evidence" value="ECO:0000318"/>
    <property type="project" value="GO_Central"/>
</dbReference>
<dbReference type="GO" id="GO:0005525">
    <property type="term" value="F:GTP binding"/>
    <property type="evidence" value="ECO:0000318"/>
    <property type="project" value="GO_Central"/>
</dbReference>
<dbReference type="GO" id="GO:0003924">
    <property type="term" value="F:GTPase activity"/>
    <property type="evidence" value="ECO:0007669"/>
    <property type="project" value="InterPro"/>
</dbReference>
<dbReference type="GO" id="GO:0002244">
    <property type="term" value="P:hematopoietic progenitor cell differentiation"/>
    <property type="evidence" value="ECO:0000266"/>
    <property type="project" value="RGD"/>
</dbReference>
<dbReference type="GO" id="GO:0006886">
    <property type="term" value="P:intracellular protein transport"/>
    <property type="evidence" value="ECO:0000318"/>
    <property type="project" value="GO_Central"/>
</dbReference>
<dbReference type="GO" id="GO:0016192">
    <property type="term" value="P:vesicle-mediated transport"/>
    <property type="evidence" value="ECO:0000318"/>
    <property type="project" value="GO_Central"/>
</dbReference>
<dbReference type="FunFam" id="3.40.50.300:FF:000898">
    <property type="entry name" value="ADP-ribosylation factor-like protein 11"/>
    <property type="match status" value="1"/>
</dbReference>
<dbReference type="Gene3D" id="3.40.50.300">
    <property type="entry name" value="P-loop containing nucleotide triphosphate hydrolases"/>
    <property type="match status" value="1"/>
</dbReference>
<dbReference type="InterPro" id="IPR027417">
    <property type="entry name" value="P-loop_NTPase"/>
</dbReference>
<dbReference type="InterPro" id="IPR005225">
    <property type="entry name" value="Small_GTP-bd"/>
</dbReference>
<dbReference type="InterPro" id="IPR024156">
    <property type="entry name" value="Small_GTPase_ARF"/>
</dbReference>
<dbReference type="InterPro" id="IPR006689">
    <property type="entry name" value="Small_GTPase_ARF/SAR"/>
</dbReference>
<dbReference type="NCBIfam" id="TIGR00231">
    <property type="entry name" value="small_GTP"/>
    <property type="match status" value="1"/>
</dbReference>
<dbReference type="PANTHER" id="PTHR11711">
    <property type="entry name" value="ADP RIBOSYLATION FACTOR-RELATED"/>
    <property type="match status" value="1"/>
</dbReference>
<dbReference type="Pfam" id="PF00025">
    <property type="entry name" value="Arf"/>
    <property type="match status" value="1"/>
</dbReference>
<dbReference type="PRINTS" id="PR00328">
    <property type="entry name" value="SAR1GTPBP"/>
</dbReference>
<dbReference type="SMART" id="SM00177">
    <property type="entry name" value="ARF"/>
    <property type="match status" value="1"/>
</dbReference>
<dbReference type="SMART" id="SM00178">
    <property type="entry name" value="SAR"/>
    <property type="match status" value="1"/>
</dbReference>
<dbReference type="SUPFAM" id="SSF52540">
    <property type="entry name" value="P-loop containing nucleoside triphosphate hydrolases"/>
    <property type="match status" value="1"/>
</dbReference>
<dbReference type="PROSITE" id="PS51417">
    <property type="entry name" value="ARF"/>
    <property type="match status" value="1"/>
</dbReference>